<dbReference type="EMBL" id="AE017180">
    <property type="protein sequence ID" value="AAR35294.1"/>
    <property type="molecule type" value="Genomic_DNA"/>
</dbReference>
<dbReference type="RefSeq" id="NP_952967.1">
    <property type="nucleotide sequence ID" value="NC_002939.5"/>
</dbReference>
<dbReference type="RefSeq" id="WP_010942563.1">
    <property type="nucleotide sequence ID" value="NC_002939.5"/>
</dbReference>
<dbReference type="SMR" id="P61304"/>
<dbReference type="FunCoup" id="P61304">
    <property type="interactions" value="575"/>
</dbReference>
<dbReference type="STRING" id="243231.GSU1918"/>
<dbReference type="EnsemblBacteria" id="AAR35294">
    <property type="protein sequence ID" value="AAR35294"/>
    <property type="gene ID" value="GSU1918"/>
</dbReference>
<dbReference type="KEGG" id="gsu:GSU1918"/>
<dbReference type="PATRIC" id="fig|243231.5.peg.1956"/>
<dbReference type="eggNOG" id="COG0233">
    <property type="taxonomic scope" value="Bacteria"/>
</dbReference>
<dbReference type="HOGENOM" id="CLU_073981_2_0_7"/>
<dbReference type="InParanoid" id="P61304"/>
<dbReference type="OrthoDB" id="9804006at2"/>
<dbReference type="Proteomes" id="UP000000577">
    <property type="component" value="Chromosome"/>
</dbReference>
<dbReference type="GO" id="GO:0005737">
    <property type="term" value="C:cytoplasm"/>
    <property type="evidence" value="ECO:0000318"/>
    <property type="project" value="GO_Central"/>
</dbReference>
<dbReference type="GO" id="GO:0005829">
    <property type="term" value="C:cytosol"/>
    <property type="evidence" value="ECO:0007669"/>
    <property type="project" value="GOC"/>
</dbReference>
<dbReference type="GO" id="GO:0043023">
    <property type="term" value="F:ribosomal large subunit binding"/>
    <property type="evidence" value="ECO:0000318"/>
    <property type="project" value="GO_Central"/>
</dbReference>
<dbReference type="GO" id="GO:0002184">
    <property type="term" value="P:cytoplasmic translational termination"/>
    <property type="evidence" value="ECO:0000318"/>
    <property type="project" value="GO_Central"/>
</dbReference>
<dbReference type="GO" id="GO:0006412">
    <property type="term" value="P:translation"/>
    <property type="evidence" value="ECO:0000318"/>
    <property type="project" value="GO_Central"/>
</dbReference>
<dbReference type="CDD" id="cd00520">
    <property type="entry name" value="RRF"/>
    <property type="match status" value="1"/>
</dbReference>
<dbReference type="FunFam" id="1.10.132.20:FF:000001">
    <property type="entry name" value="Ribosome-recycling factor"/>
    <property type="match status" value="1"/>
</dbReference>
<dbReference type="FunFam" id="3.30.1360.40:FF:000001">
    <property type="entry name" value="Ribosome-recycling factor"/>
    <property type="match status" value="1"/>
</dbReference>
<dbReference type="Gene3D" id="3.30.1360.40">
    <property type="match status" value="1"/>
</dbReference>
<dbReference type="Gene3D" id="1.10.132.20">
    <property type="entry name" value="Ribosome-recycling factor"/>
    <property type="match status" value="1"/>
</dbReference>
<dbReference type="HAMAP" id="MF_00040">
    <property type="entry name" value="RRF"/>
    <property type="match status" value="1"/>
</dbReference>
<dbReference type="InterPro" id="IPR002661">
    <property type="entry name" value="Ribosome_recyc_fac"/>
</dbReference>
<dbReference type="InterPro" id="IPR023584">
    <property type="entry name" value="Ribosome_recyc_fac_dom"/>
</dbReference>
<dbReference type="InterPro" id="IPR036191">
    <property type="entry name" value="RRF_sf"/>
</dbReference>
<dbReference type="NCBIfam" id="TIGR00496">
    <property type="entry name" value="frr"/>
    <property type="match status" value="1"/>
</dbReference>
<dbReference type="PANTHER" id="PTHR20982:SF3">
    <property type="entry name" value="MITOCHONDRIAL RIBOSOME RECYCLING FACTOR PSEUDO 1"/>
    <property type="match status" value="1"/>
</dbReference>
<dbReference type="PANTHER" id="PTHR20982">
    <property type="entry name" value="RIBOSOME RECYCLING FACTOR"/>
    <property type="match status" value="1"/>
</dbReference>
<dbReference type="Pfam" id="PF01765">
    <property type="entry name" value="RRF"/>
    <property type="match status" value="1"/>
</dbReference>
<dbReference type="SUPFAM" id="SSF55194">
    <property type="entry name" value="Ribosome recycling factor, RRF"/>
    <property type="match status" value="1"/>
</dbReference>
<comment type="function">
    <text evidence="1">Responsible for the release of ribosomes from messenger RNA at the termination of protein biosynthesis. May increase the efficiency of translation by recycling ribosomes from one round of translation to another.</text>
</comment>
<comment type="subcellular location">
    <subcellularLocation>
        <location evidence="1">Cytoplasm</location>
    </subcellularLocation>
</comment>
<comment type="similarity">
    <text evidence="1">Belongs to the RRF family.</text>
</comment>
<evidence type="ECO:0000255" key="1">
    <source>
        <dbReference type="HAMAP-Rule" id="MF_00040"/>
    </source>
</evidence>
<feature type="chain" id="PRO_0000167464" description="Ribosome-recycling factor">
    <location>
        <begin position="1"/>
        <end position="185"/>
    </location>
</feature>
<name>RRF_GEOSL</name>
<reference key="1">
    <citation type="journal article" date="2003" name="Science">
        <title>Genome of Geobacter sulfurreducens: metal reduction in subsurface environments.</title>
        <authorList>
            <person name="Methe B.A."/>
            <person name="Nelson K.E."/>
            <person name="Eisen J.A."/>
            <person name="Paulsen I.T."/>
            <person name="Nelson W.C."/>
            <person name="Heidelberg J.F."/>
            <person name="Wu D."/>
            <person name="Wu M."/>
            <person name="Ward N.L."/>
            <person name="Beanan M.J."/>
            <person name="Dodson R.J."/>
            <person name="Madupu R."/>
            <person name="Brinkac L.M."/>
            <person name="Daugherty S.C."/>
            <person name="DeBoy R.T."/>
            <person name="Durkin A.S."/>
            <person name="Gwinn M.L."/>
            <person name="Kolonay J.F."/>
            <person name="Sullivan S.A."/>
            <person name="Haft D.H."/>
            <person name="Selengut J."/>
            <person name="Davidsen T.M."/>
            <person name="Zafar N."/>
            <person name="White O."/>
            <person name="Tran B."/>
            <person name="Romero C."/>
            <person name="Forberger H.A."/>
            <person name="Weidman J.F."/>
            <person name="Khouri H.M."/>
            <person name="Feldblyum T.V."/>
            <person name="Utterback T.R."/>
            <person name="Van Aken S.E."/>
            <person name="Lovley D.R."/>
            <person name="Fraser C.M."/>
        </authorList>
    </citation>
    <scope>NUCLEOTIDE SEQUENCE [LARGE SCALE GENOMIC DNA]</scope>
    <source>
        <strain>ATCC 51573 / DSM 12127 / PCA</strain>
    </source>
</reference>
<gene>
    <name evidence="1" type="primary">frr</name>
    <name type="ordered locus">GSU1918</name>
</gene>
<keyword id="KW-0963">Cytoplasm</keyword>
<keyword id="KW-0648">Protein biosynthesis</keyword>
<keyword id="KW-1185">Reference proteome</keyword>
<sequence length="185" mass="21116">MTKDVINDMKSHMEKSVESLRREYQKVRTGRANTGLLDEIRVDFYGNPSPLNQVATLAVPEPRTITIQPWETKMIPVIEKAILNANLGFTPSNDGKLIRISLPPLTEERRKEIVKSLKKTAEDAKIAIRNIRRDAIDGLKKLEKDKKISEDDLKRAEKEVQDVTNVYVAKVDEVLAHKEKEVMEV</sequence>
<accession>P61304</accession>
<protein>
    <recommendedName>
        <fullName evidence="1">Ribosome-recycling factor</fullName>
        <shortName evidence="1">RRF</shortName>
    </recommendedName>
    <alternativeName>
        <fullName evidence="1">Ribosome-releasing factor</fullName>
    </alternativeName>
</protein>
<organism>
    <name type="scientific">Geobacter sulfurreducens (strain ATCC 51573 / DSM 12127 / PCA)</name>
    <dbReference type="NCBI Taxonomy" id="243231"/>
    <lineage>
        <taxon>Bacteria</taxon>
        <taxon>Pseudomonadati</taxon>
        <taxon>Thermodesulfobacteriota</taxon>
        <taxon>Desulfuromonadia</taxon>
        <taxon>Geobacterales</taxon>
        <taxon>Geobacteraceae</taxon>
        <taxon>Geobacter</taxon>
    </lineage>
</organism>
<proteinExistence type="inferred from homology"/>